<accession>P76474</accession>
<accession>Q2MAN0</accession>
<accession>Q47376</accession>
<dbReference type="EMBL" id="L35031">
    <property type="protein sequence ID" value="AAB04894.1"/>
    <property type="status" value="ALT_FRAME"/>
    <property type="molecule type" value="Genomic_DNA"/>
</dbReference>
<dbReference type="EMBL" id="U00096">
    <property type="protein sequence ID" value="AAC75318.2"/>
    <property type="molecule type" value="Genomic_DNA"/>
</dbReference>
<dbReference type="EMBL" id="AP009048">
    <property type="protein sequence ID" value="BAE76676.1"/>
    <property type="molecule type" value="Genomic_DNA"/>
</dbReference>
<dbReference type="PIR" id="H64996">
    <property type="entry name" value="H64996"/>
</dbReference>
<dbReference type="RefSeq" id="NP_416761.4">
    <property type="nucleotide sequence ID" value="NC_000913.3"/>
</dbReference>
<dbReference type="RefSeq" id="WP_000523880.1">
    <property type="nucleotide sequence ID" value="NZ_STEB01000008.1"/>
</dbReference>
<dbReference type="BioGRID" id="4260501">
    <property type="interactions" value="651"/>
</dbReference>
<dbReference type="DIP" id="DIP-48225N"/>
<dbReference type="FunCoup" id="P76474">
    <property type="interactions" value="111"/>
</dbReference>
<dbReference type="IntAct" id="P76474">
    <property type="interactions" value="1"/>
</dbReference>
<dbReference type="STRING" id="511145.b2258"/>
<dbReference type="TCDB" id="2.A.7.22.1">
    <property type="family name" value="the drug/metabolite transporter (dmt) superfamily"/>
</dbReference>
<dbReference type="PaxDb" id="511145-b2258"/>
<dbReference type="EnsemblBacteria" id="AAC75318">
    <property type="protein sequence ID" value="AAC75318"/>
    <property type="gene ID" value="b2258"/>
</dbReference>
<dbReference type="GeneID" id="93774915"/>
<dbReference type="GeneID" id="945344"/>
<dbReference type="KEGG" id="ecj:JW5373"/>
<dbReference type="KEGG" id="eco:b2258"/>
<dbReference type="KEGG" id="ecoc:C3026_12615"/>
<dbReference type="PATRIC" id="fig|511145.12.peg.2351"/>
<dbReference type="EchoBASE" id="EB3847"/>
<dbReference type="eggNOG" id="COG2076">
    <property type="taxonomic scope" value="Bacteria"/>
</dbReference>
<dbReference type="HOGENOM" id="CLU_131462_1_0_6"/>
<dbReference type="InParanoid" id="P76474"/>
<dbReference type="OMA" id="NEPMSLR"/>
<dbReference type="OrthoDB" id="5592809at2"/>
<dbReference type="PhylomeDB" id="P76474"/>
<dbReference type="BioCyc" id="EcoCyc:G7171-MONOMER"/>
<dbReference type="BioCyc" id="MetaCyc:G7171-MONOMER"/>
<dbReference type="UniPathway" id="UPA00030"/>
<dbReference type="PRO" id="PR:P76474"/>
<dbReference type="Proteomes" id="UP000000625">
    <property type="component" value="Chromosome"/>
</dbReference>
<dbReference type="GO" id="GO:0005886">
    <property type="term" value="C:plasma membrane"/>
    <property type="evidence" value="ECO:0000314"/>
    <property type="project" value="EcoCyc"/>
</dbReference>
<dbReference type="GO" id="GO:1901505">
    <property type="term" value="F:carbohydrate derivative transmembrane transporter activity"/>
    <property type="evidence" value="ECO:0000315"/>
    <property type="project" value="EcoCyc"/>
</dbReference>
<dbReference type="GO" id="GO:0022857">
    <property type="term" value="F:transmembrane transporter activity"/>
    <property type="evidence" value="ECO:0000318"/>
    <property type="project" value="GO_Central"/>
</dbReference>
<dbReference type="GO" id="GO:1901264">
    <property type="term" value="P:carbohydrate derivative transport"/>
    <property type="evidence" value="ECO:0000315"/>
    <property type="project" value="EcoCyc"/>
</dbReference>
<dbReference type="GO" id="GO:0009245">
    <property type="term" value="P:lipid A biosynthetic process"/>
    <property type="evidence" value="ECO:0007669"/>
    <property type="project" value="UniProtKB-UniRule"/>
</dbReference>
<dbReference type="GO" id="GO:0009103">
    <property type="term" value="P:lipopolysaccharide biosynthetic process"/>
    <property type="evidence" value="ECO:0007669"/>
    <property type="project" value="UniProtKB-UniRule"/>
</dbReference>
<dbReference type="GO" id="GO:0010041">
    <property type="term" value="P:response to iron(III) ion"/>
    <property type="evidence" value="ECO:0000316"/>
    <property type="project" value="EcoCyc"/>
</dbReference>
<dbReference type="GO" id="GO:0055085">
    <property type="term" value="P:transmembrane transport"/>
    <property type="evidence" value="ECO:0000318"/>
    <property type="project" value="GO_Central"/>
</dbReference>
<dbReference type="FunFam" id="1.10.3730.20:FF:000003">
    <property type="entry name" value="Probable 4-amino-4-deoxy-L-arabinose-phosphoundecaprenol flippase subunit ArnF"/>
    <property type="match status" value="1"/>
</dbReference>
<dbReference type="Gene3D" id="1.10.3730.20">
    <property type="match status" value="1"/>
</dbReference>
<dbReference type="HAMAP" id="MF_00538">
    <property type="entry name" value="Flippase_ArnF"/>
    <property type="match status" value="1"/>
</dbReference>
<dbReference type="InterPro" id="IPR022832">
    <property type="entry name" value="Flippase_ArnF"/>
</dbReference>
<dbReference type="InterPro" id="IPR000390">
    <property type="entry name" value="Small_drug/metabolite_transptr"/>
</dbReference>
<dbReference type="NCBIfam" id="NF002816">
    <property type="entry name" value="PRK02971.1-2"/>
    <property type="match status" value="1"/>
</dbReference>
<dbReference type="PANTHER" id="PTHR30561:SF9">
    <property type="entry name" value="4-AMINO-4-DEOXY-L-ARABINOSE-PHOSPHOUNDECAPRENOL FLIPPASE SUBUNIT ARNF-RELATED"/>
    <property type="match status" value="1"/>
</dbReference>
<dbReference type="PANTHER" id="PTHR30561">
    <property type="entry name" value="SMR FAMILY PROTON-DEPENDENT DRUG EFFLUX TRANSPORTER SUGE"/>
    <property type="match status" value="1"/>
</dbReference>
<dbReference type="SUPFAM" id="SSF103481">
    <property type="entry name" value="Multidrug resistance efflux transporter EmrE"/>
    <property type="match status" value="1"/>
</dbReference>
<organism>
    <name type="scientific">Escherichia coli (strain K12)</name>
    <dbReference type="NCBI Taxonomy" id="83333"/>
    <lineage>
        <taxon>Bacteria</taxon>
        <taxon>Pseudomonadati</taxon>
        <taxon>Pseudomonadota</taxon>
        <taxon>Gammaproteobacteria</taxon>
        <taxon>Enterobacterales</taxon>
        <taxon>Enterobacteriaceae</taxon>
        <taxon>Escherichia</taxon>
    </lineage>
</organism>
<protein>
    <recommendedName>
        <fullName>Probable 4-amino-4-deoxy-L-arabinose-phosphoundecaprenol flippase subunit ArnF</fullName>
        <shortName>L-Ara4N-phosphoundecaprenol flippase subunit ArnF</shortName>
    </recommendedName>
    <alternativeName>
        <fullName>Undecaprenyl phosphate-aminoarabinose flippase subunit ArnF</fullName>
    </alternativeName>
</protein>
<gene>
    <name type="primary">arnF</name>
    <name type="synonym">pmrM</name>
    <name type="synonym">yfbJ</name>
    <name type="ordered locus">b2258</name>
    <name type="ordered locus">JW5373</name>
</gene>
<proteinExistence type="evidence at protein level"/>
<evidence type="ECO:0000255" key="1"/>
<evidence type="ECO:0000269" key="2">
    <source>
    </source>
</evidence>
<evidence type="ECO:0000269" key="3">
    <source>
    </source>
</evidence>
<evidence type="ECO:0000305" key="4"/>
<evidence type="ECO:0000305" key="5">
    <source>
    </source>
</evidence>
<name>ARNF_ECOLI</name>
<sequence length="128" mass="14085">MGLMWGLFSVIIASVAQLSLGFAASHLPPMTHLWDFIAALLAFGLDARILLLGLLGYLLSVFCWYKTLHKLALSKAYALLSMSYVLVWIASMVLPGWEGTFSLKALLGVACIMSGLMLIFLPTTKQRY</sequence>
<keyword id="KW-0997">Cell inner membrane</keyword>
<keyword id="KW-1003">Cell membrane</keyword>
<keyword id="KW-0441">Lipid A biosynthesis</keyword>
<keyword id="KW-0444">Lipid biosynthesis</keyword>
<keyword id="KW-0443">Lipid metabolism</keyword>
<keyword id="KW-0448">Lipopolysaccharide biosynthesis</keyword>
<keyword id="KW-0472">Membrane</keyword>
<keyword id="KW-1185">Reference proteome</keyword>
<keyword id="KW-0812">Transmembrane</keyword>
<keyword id="KW-1133">Transmembrane helix</keyword>
<keyword id="KW-0813">Transport</keyword>
<comment type="function">
    <text evidence="3">Translocates 4-amino-4-deoxy-L-arabinose-phosphoundecaprenol (alpha-L-Ara4N-phosphoundecaprenol) from the cytoplasmic to the periplasmic side of the inner membrane.</text>
</comment>
<comment type="pathway">
    <text>Bacterial outer membrane biogenesis; lipopolysaccharide biosynthesis.</text>
</comment>
<comment type="subunit">
    <text evidence="5">Heterodimer of ArnE and ArnF.</text>
</comment>
<comment type="subcellular location">
    <subcellularLocation>
        <location>Cell inner membrane</location>
        <topology>Multi-pass membrane protein</topology>
    </subcellularLocation>
</comment>
<comment type="induction">
    <text evidence="2">Induced by BasR.</text>
</comment>
<comment type="disruption phenotype">
    <text evidence="3">Cells lacking this gene are polymyxin sensitive. Lipid A is no longer modified with L-Ara4N even though the level of the lipid-linked donor of the L-Ara4N moiety, alpha-L-Ara4N-phosphoundecaprenol, is not reduced. However, the alpha-L-Ara4N-phosphoundecaprenol is less concentrated on the periplasmic surface of the inner membrane when compared to wild-type.</text>
</comment>
<comment type="similarity">
    <text evidence="4">Belongs to the ArnF family.</text>
</comment>
<comment type="sequence caution" evidence="4">
    <conflict type="frameshift">
        <sequence resource="EMBL-CDS" id="AAB04894"/>
    </conflict>
</comment>
<reference key="1">
    <citation type="journal article" date="1996" name="Gene">
        <title>Menaquinone (vitamin K2) biosynthesis: localization and characterization of the menE gene from Escherichia coli.</title>
        <authorList>
            <person name="Sharma V."/>
            <person name="Hudspeth M.E.S."/>
            <person name="Meganathan R."/>
        </authorList>
    </citation>
    <scope>NUCLEOTIDE SEQUENCE [GENOMIC DNA]</scope>
    <source>
        <strain>K12</strain>
    </source>
</reference>
<reference key="2">
    <citation type="journal article" date="1997" name="Science">
        <title>The complete genome sequence of Escherichia coli K-12.</title>
        <authorList>
            <person name="Blattner F.R."/>
            <person name="Plunkett G. III"/>
            <person name="Bloch C.A."/>
            <person name="Perna N.T."/>
            <person name="Burland V."/>
            <person name="Riley M."/>
            <person name="Collado-Vides J."/>
            <person name="Glasner J.D."/>
            <person name="Rode C.K."/>
            <person name="Mayhew G.F."/>
            <person name="Gregor J."/>
            <person name="Davis N.W."/>
            <person name="Kirkpatrick H.A."/>
            <person name="Goeden M.A."/>
            <person name="Rose D.J."/>
            <person name="Mau B."/>
            <person name="Shao Y."/>
        </authorList>
    </citation>
    <scope>NUCLEOTIDE SEQUENCE [LARGE SCALE GENOMIC DNA]</scope>
    <source>
        <strain>K12 / MG1655 / ATCC 47076</strain>
    </source>
</reference>
<reference key="3">
    <citation type="journal article" date="2006" name="Mol. Syst. Biol.">
        <title>Highly accurate genome sequences of Escherichia coli K-12 strains MG1655 and W3110.</title>
        <authorList>
            <person name="Hayashi K."/>
            <person name="Morooka N."/>
            <person name="Yamamoto Y."/>
            <person name="Fujita K."/>
            <person name="Isono K."/>
            <person name="Choi S."/>
            <person name="Ohtsubo E."/>
            <person name="Baba T."/>
            <person name="Wanner B.L."/>
            <person name="Mori H."/>
            <person name="Horiuchi T."/>
        </authorList>
    </citation>
    <scope>NUCLEOTIDE SEQUENCE [LARGE SCALE GENOMIC DNA]</scope>
    <source>
        <strain>K12 / W3110 / ATCC 27325 / DSM 5911</strain>
    </source>
</reference>
<reference key="4">
    <citation type="journal article" date="2005" name="Science">
        <title>Global topology analysis of the Escherichia coli inner membrane proteome.</title>
        <authorList>
            <person name="Daley D.O."/>
            <person name="Rapp M."/>
            <person name="Granseth E."/>
            <person name="Melen K."/>
            <person name="Drew D."/>
            <person name="von Heijne G."/>
        </authorList>
    </citation>
    <scope>TOPOLOGY [LARGE SCALE ANALYSIS]</scope>
    <source>
        <strain>K12 / MG1655 / ATCC 47076</strain>
    </source>
</reference>
<reference key="5">
    <citation type="journal article" date="2004" name="Proc. Natl. Acad. Sci. U.S.A.">
        <title>Phenotypic differences between Salmonella and Escherichia coli resulting from the disparate regulation of homologous genes.</title>
        <authorList>
            <person name="Winfield M.D."/>
            <person name="Groisman E.A."/>
        </authorList>
    </citation>
    <scope>INDUCTION BY BASR</scope>
    <source>
        <strain>K12 / MG1655 / ATCC 47076</strain>
    </source>
</reference>
<reference key="6">
    <citation type="journal article" date="2007" name="J. Biol. Chem.">
        <title>An undecaprenyl phosphate-aminoarabinose flippase required for polymyxin resistance in Escherichia coli.</title>
        <authorList>
            <person name="Yan A."/>
            <person name="Guan Z."/>
            <person name="Raetz C.R.H."/>
        </authorList>
    </citation>
    <scope>FUNCTION</scope>
    <scope>SUBUNIT</scope>
    <scope>DISRUPTION PHENOTYPE</scope>
    <source>
        <strain>K12 / W3110 / ATCC 27325 / DSM 5911</strain>
    </source>
</reference>
<feature type="chain" id="PRO_0000218152" description="Probable 4-amino-4-deoxy-L-arabinose-phosphoundecaprenol flippase subunit ArnF">
    <location>
        <begin position="1"/>
        <end position="128"/>
    </location>
</feature>
<feature type="topological domain" description="Cytoplasmic" evidence="1">
    <location>
        <begin position="1"/>
        <end position="2"/>
    </location>
</feature>
<feature type="transmembrane region" description="Helical" evidence="1">
    <location>
        <begin position="3"/>
        <end position="23"/>
    </location>
</feature>
<feature type="topological domain" description="Periplasmic" evidence="1">
    <location>
        <begin position="24"/>
        <end position="35"/>
    </location>
</feature>
<feature type="transmembrane region" description="Helical" evidence="1">
    <location>
        <begin position="36"/>
        <end position="56"/>
    </location>
</feature>
<feature type="topological domain" description="Cytoplasmic" evidence="1">
    <location>
        <begin position="57"/>
        <end position="76"/>
    </location>
</feature>
<feature type="transmembrane region" description="Helical" evidence="1">
    <location>
        <begin position="77"/>
        <end position="97"/>
    </location>
</feature>
<feature type="topological domain" description="Periplasmic" evidence="1">
    <location>
        <begin position="98"/>
        <end position="100"/>
    </location>
</feature>
<feature type="transmembrane region" description="Helical" evidence="1">
    <location>
        <begin position="101"/>
        <end position="121"/>
    </location>
</feature>
<feature type="topological domain" description="Cytoplasmic" evidence="1">
    <location>
        <begin position="122"/>
        <end position="128"/>
    </location>
</feature>